<proteinExistence type="evidence at protein level"/>
<reference key="1">
    <citation type="journal article" date="1997" name="Yeast">
        <title>The sequence of 32kb on the left arm of yeast chromosome XII reveals six known genes, a new member of the seripauperins family and a new ABC transporter homologous to the human multidrug resistance protein.</title>
        <authorList>
            <person name="Purnelle B."/>
            <person name="Goffeau A."/>
        </authorList>
    </citation>
    <scope>NUCLEOTIDE SEQUENCE [GENOMIC DNA]</scope>
    <source>
        <strain>ATCC 204508 / S288c</strain>
    </source>
</reference>
<reference key="2">
    <citation type="journal article" date="1997" name="Nature">
        <title>The nucleotide sequence of Saccharomyces cerevisiae chromosome XII.</title>
        <authorList>
            <person name="Johnston M."/>
            <person name="Hillier L.W."/>
            <person name="Riles L."/>
            <person name="Albermann K."/>
            <person name="Andre B."/>
            <person name="Ansorge W."/>
            <person name="Benes V."/>
            <person name="Brueckner M."/>
            <person name="Delius H."/>
            <person name="Dubois E."/>
            <person name="Duesterhoeft A."/>
            <person name="Entian K.-D."/>
            <person name="Floeth M."/>
            <person name="Goffeau A."/>
            <person name="Hebling U."/>
            <person name="Heumann K."/>
            <person name="Heuss-Neitzel D."/>
            <person name="Hilbert H."/>
            <person name="Hilger F."/>
            <person name="Kleine K."/>
            <person name="Koetter P."/>
            <person name="Louis E.J."/>
            <person name="Messenguy F."/>
            <person name="Mewes H.-W."/>
            <person name="Miosga T."/>
            <person name="Moestl D."/>
            <person name="Mueller-Auer S."/>
            <person name="Nentwich U."/>
            <person name="Obermaier B."/>
            <person name="Piravandi E."/>
            <person name="Pohl T.M."/>
            <person name="Portetelle D."/>
            <person name="Purnelle B."/>
            <person name="Rechmann S."/>
            <person name="Rieger M."/>
            <person name="Rinke M."/>
            <person name="Rose M."/>
            <person name="Scharfe M."/>
            <person name="Scherens B."/>
            <person name="Scholler P."/>
            <person name="Schwager C."/>
            <person name="Schwarz S."/>
            <person name="Underwood A.P."/>
            <person name="Urrestarazu L.A."/>
            <person name="Vandenbol M."/>
            <person name="Verhasselt P."/>
            <person name="Vierendeels F."/>
            <person name="Voet M."/>
            <person name="Volckaert G."/>
            <person name="Voss H."/>
            <person name="Wambutt R."/>
            <person name="Wedler E."/>
            <person name="Wedler H."/>
            <person name="Zimmermann F.K."/>
            <person name="Zollner A."/>
            <person name="Hani J."/>
            <person name="Hoheisel J.D."/>
        </authorList>
    </citation>
    <scope>NUCLEOTIDE SEQUENCE [LARGE SCALE GENOMIC DNA]</scope>
    <source>
        <strain>ATCC 204508 / S288c</strain>
    </source>
</reference>
<reference key="3">
    <citation type="journal article" date="2014" name="G3 (Bethesda)">
        <title>The reference genome sequence of Saccharomyces cerevisiae: Then and now.</title>
        <authorList>
            <person name="Engel S.R."/>
            <person name="Dietrich F.S."/>
            <person name="Fisk D.G."/>
            <person name="Binkley G."/>
            <person name="Balakrishnan R."/>
            <person name="Costanzo M.C."/>
            <person name="Dwight S.S."/>
            <person name="Hitz B.C."/>
            <person name="Karra K."/>
            <person name="Nash R.S."/>
            <person name="Weng S."/>
            <person name="Wong E.D."/>
            <person name="Lloyd P."/>
            <person name="Skrzypek M.S."/>
            <person name="Miyasato S.R."/>
            <person name="Simison M."/>
            <person name="Cherry J.M."/>
        </authorList>
    </citation>
    <scope>GENOME REANNOTATION</scope>
    <source>
        <strain>ATCC 204508 / S288c</strain>
    </source>
</reference>
<reference key="4">
    <citation type="journal article" date="2003" name="Nature">
        <title>Global analysis of protein localization in budding yeast.</title>
        <authorList>
            <person name="Huh W.-K."/>
            <person name="Falvo J.V."/>
            <person name="Gerke L.C."/>
            <person name="Carroll A.S."/>
            <person name="Howson R.W."/>
            <person name="Weissman J.S."/>
            <person name="O'Shea E.K."/>
        </authorList>
    </citation>
    <scope>SUBCELLULAR LOCATION [LARGE SCALE ANALYSIS]</scope>
</reference>
<reference key="5">
    <citation type="journal article" date="2003" name="Nature">
        <title>Global analysis of protein expression in yeast.</title>
        <authorList>
            <person name="Ghaemmaghami S."/>
            <person name="Huh W.-K."/>
            <person name="Bower K."/>
            <person name="Howson R.W."/>
            <person name="Belle A."/>
            <person name="Dephoure N."/>
            <person name="O'Shea E.K."/>
            <person name="Weissman J.S."/>
        </authorList>
    </citation>
    <scope>LEVEL OF PROTEIN EXPRESSION [LARGE SCALE ANALYSIS]</scope>
</reference>
<reference key="6">
    <citation type="journal article" date="2004" name="J. Biol. Chem.">
        <title>Hif1 is a component of yeast histone acetyltransferase B, a complex mainly localized in the nucleus.</title>
        <authorList>
            <person name="Poveda A."/>
            <person name="Pamblanco M."/>
            <person name="Tafrov S."/>
            <person name="Tordera V."/>
            <person name="Sternglanz R."/>
            <person name="Sendra R."/>
        </authorList>
    </citation>
    <scope>IDENTIFICATION IN THE NUCLEAR HAT-B COMPLEX</scope>
    <scope>FUNCTION OF THE HAT-B COMPLEX</scope>
    <scope>INTERACTION WITH HISTONE H4</scope>
    <scope>SUBCELLULAR LOCATION</scope>
</reference>
<reference key="7">
    <citation type="journal article" date="2004" name="Mol. Cell">
        <title>The nuclear Hat1p/Hat2p complex: a molecular link between type B histone acetyltransferases and chromatin assembly.</title>
        <authorList>
            <person name="Ai X."/>
            <person name="Parthun M.R."/>
        </authorList>
    </citation>
    <scope>FUNCTION</scope>
    <scope>IDENTIFICATION IN THE NUCLEAR HAT-B COMPLEX</scope>
    <scope>INTERACTION WITH HISTONES H3 AND H4</scope>
    <scope>SUBCELLULAR LOCATION</scope>
    <scope>IDENTIFICATION BY MASS SPECTROMETRY</scope>
</reference>
<reference key="8">
    <citation type="journal article" date="2008" name="Mol. Cell. Proteomics">
        <title>A multidimensional chromatography technology for in-depth phosphoproteome analysis.</title>
        <authorList>
            <person name="Albuquerque C.P."/>
            <person name="Smolka M.B."/>
            <person name="Payne S.H."/>
            <person name="Bafna V."/>
            <person name="Eng J."/>
            <person name="Zhou H."/>
        </authorList>
    </citation>
    <scope>PHOSPHORYLATION [LARGE SCALE ANALYSIS] AT SER-174</scope>
    <scope>IDENTIFICATION BY MASS SPECTROMETRY [LARGE SCALE ANALYSIS]</scope>
</reference>
<reference key="9">
    <citation type="journal article" date="2009" name="Science">
        <title>Global analysis of Cdk1 substrate phosphorylation sites provides insights into evolution.</title>
        <authorList>
            <person name="Holt L.J."/>
            <person name="Tuch B.B."/>
            <person name="Villen J."/>
            <person name="Johnson A.D."/>
            <person name="Gygi S.P."/>
            <person name="Morgan D.O."/>
        </authorList>
    </citation>
    <scope>PHOSPHORYLATION [LARGE SCALE ANALYSIS] AT SER-174</scope>
    <scope>IDENTIFICATION BY MASS SPECTROMETRY [LARGE SCALE ANALYSIS]</scope>
</reference>
<reference key="10">
    <citation type="journal article" date="2014" name="Biochem. J.">
        <title>Structural insights into yeast histone chaperone Hif1: a scaffold protein recruiting protein complexes to core histones.</title>
        <authorList>
            <person name="Liu H."/>
            <person name="Zhang M."/>
            <person name="He W."/>
            <person name="Zhu Z."/>
            <person name="Teng M."/>
            <person name="Gao Y."/>
            <person name="Niu L."/>
        </authorList>
    </citation>
    <scope>X-RAY CRYSTALLOGRAPHY (2.10 ANGSTROMS)</scope>
    <scope>SUBUNIT</scope>
    <scope>INTERACTION WITH HISTONE H2A; H2B; H3 AND H4</scope>
    <scope>DOMAIN</scope>
    <scope>MUTAGENESIS OF 85-ASP--PHE-198 AND 135-LEU--VAL-158</scope>
</reference>
<reference key="11">
    <citation type="journal article" date="2016" name="Structure">
        <title>Structural Insights into the Association of Hif1 with Histones H2A-H2B Dimer and H3-H4 Tetramer.</title>
        <authorList>
            <person name="Zhang M."/>
            <person name="Liu H."/>
            <person name="Gao Y."/>
            <person name="Zhu Z."/>
            <person name="Chen Z."/>
            <person name="Zheng P."/>
            <person name="Xue L."/>
            <person name="Li J."/>
            <person name="Teng M."/>
            <person name="Niu L."/>
        </authorList>
    </citation>
    <scope>X-RAY CRYSTALLOGRAPHY (2.62 ANGSTROMS)</scope>
    <scope>SUBUNIT</scope>
    <scope>INTERACTION WITH HISTONE H2A; H2B; H3 AND H4</scope>
    <scope>DOMAIN</scope>
    <scope>MUTAGENESIS OF 80-GLY--VAL-158; 85-ASP--GLU-198; 95-GLY--VAL-158; 135-LEU--VAL-158; GLU-248; GLU-250; ASP-288; ARG-291 AND 332-GLN--GLU-342</scope>
</reference>
<accession>Q12373</accession>
<accession>D6VXY2</accession>
<organism>
    <name type="scientific">Saccharomyces cerevisiae (strain ATCC 204508 / S288c)</name>
    <name type="common">Baker's yeast</name>
    <dbReference type="NCBI Taxonomy" id="559292"/>
    <lineage>
        <taxon>Eukaryota</taxon>
        <taxon>Fungi</taxon>
        <taxon>Dikarya</taxon>
        <taxon>Ascomycota</taxon>
        <taxon>Saccharomycotina</taxon>
        <taxon>Saccharomycetes</taxon>
        <taxon>Saccharomycetales</taxon>
        <taxon>Saccharomycetaceae</taxon>
        <taxon>Saccharomyces</taxon>
    </lineage>
</organism>
<feature type="chain" id="PRO_0000227731" description="HAT1-interacting factor 1">
    <location>
        <begin position="1"/>
        <end position="385"/>
    </location>
</feature>
<feature type="repeat" description="TPR 1" evidence="1">
    <location>
        <begin position="186"/>
        <end position="220"/>
    </location>
</feature>
<feature type="repeat" description="TPR 2" evidence="1">
    <location>
        <begin position="229"/>
        <end position="262"/>
    </location>
</feature>
<feature type="repeat" description="TPR 3" evidence="1">
    <location>
        <begin position="289"/>
        <end position="322"/>
    </location>
</feature>
<feature type="region of interest" description="Important for interaction with heterotetrameric histone H3 and H4 and for interaction with dimeric histone H2A and H2B" evidence="7 8">
    <location>
        <begin position="80"/>
        <end position="199"/>
    </location>
</feature>
<feature type="region of interest" description="Disordered" evidence="2">
    <location>
        <begin position="85"/>
        <end position="163"/>
    </location>
</feature>
<feature type="region of interest" description="Interaction with dimeric histone H2A and H2B" evidence="8">
    <location>
        <begin position="248"/>
        <end position="332"/>
    </location>
</feature>
<feature type="region of interest" description="Disordered" evidence="2">
    <location>
        <begin position="340"/>
        <end position="385"/>
    </location>
</feature>
<feature type="compositionally biased region" description="Low complexity" evidence="2">
    <location>
        <begin position="85"/>
        <end position="97"/>
    </location>
</feature>
<feature type="compositionally biased region" description="Low complexity" evidence="2">
    <location>
        <begin position="105"/>
        <end position="116"/>
    </location>
</feature>
<feature type="compositionally biased region" description="Acidic residues" evidence="2">
    <location>
        <begin position="129"/>
        <end position="160"/>
    </location>
</feature>
<feature type="compositionally biased region" description="Polar residues" evidence="2">
    <location>
        <begin position="342"/>
        <end position="359"/>
    </location>
</feature>
<feature type="modified residue" description="Phosphoserine" evidence="10 11">
    <location>
        <position position="174"/>
    </location>
</feature>
<feature type="mutagenesis site" description="Abolishes interaction with heterotetrameric histone H3 and H4 and with dimeric histone H2A and H2B." evidence="8">
    <location>
        <begin position="80"/>
        <end position="158"/>
    </location>
</feature>
<feature type="mutagenesis site" description="Abolishes interaction with histones H2A, H2B, H3 and H4." evidence="7 8">
    <location>
        <begin position="85"/>
        <end position="198"/>
    </location>
</feature>
<feature type="mutagenesis site" description="Mildly decreases interaction with heterotetrameric histone H3 and H4 and abolishes interaction with dimeric histone H2A and H2B." evidence="8">
    <location>
        <begin position="95"/>
        <end position="158"/>
    </location>
</feature>
<feature type="mutagenesis site" description="Minimal decrease of interaction with heterotetrameric histone H3 and H4 and with dimeric histone H2A and H2B." evidence="7 8">
    <location>
        <begin position="135"/>
        <end position="158"/>
    </location>
</feature>
<feature type="mutagenesis site" description="Strongly reduces affinity for dimeric histone H2A and H2B; when associated with A-250; A-288; A-291 and 332-A--A-342." evidence="8">
    <original>E</original>
    <variation>A</variation>
    <location>
        <position position="248"/>
    </location>
</feature>
<feature type="mutagenesis site" description="Strongly reduces affinity for dimeric histone H2A and H2B; when associated with A-248; A-288; A-291 and 332-A--A-342." evidence="8">
    <original>E</original>
    <variation>A</variation>
    <location>
        <position position="250"/>
    </location>
</feature>
<feature type="mutagenesis site" description="Strongly reduces affinity for dimeric histone H2A and H2B; when associated with A-248; A-250; A-291 and 332-A--A-342." evidence="8">
    <original>D</original>
    <variation>A</variation>
    <location>
        <position position="288"/>
    </location>
</feature>
<feature type="mutagenesis site" description="Strongly reduces affinity for dimeric histone H2A and H2B; when associated with A-248; A-250; A-288 and 332-A--A-342." evidence="8">
    <original>R</original>
    <variation>A</variation>
    <location>
        <position position="291"/>
    </location>
</feature>
<feature type="mutagenesis site" description="Strongly reduces affinity for dimeric histone H2A and H2B; when associated with A-248; A-250; A-288 and A-291." evidence="8">
    <original>QIQDDIDEVQE</original>
    <variation>AIQAAIDAVQA</variation>
    <location>
        <begin position="332"/>
        <end position="342"/>
    </location>
</feature>
<feature type="helix" evidence="12">
    <location>
        <begin position="14"/>
        <end position="34"/>
    </location>
</feature>
<feature type="helix" evidence="12">
    <location>
        <begin position="38"/>
        <end position="51"/>
    </location>
</feature>
<feature type="strand" evidence="12">
    <location>
        <begin position="54"/>
        <end position="56"/>
    </location>
</feature>
<feature type="helix" evidence="12">
    <location>
        <begin position="61"/>
        <end position="77"/>
    </location>
</feature>
<feature type="helix" evidence="12">
    <location>
        <begin position="161"/>
        <end position="163"/>
    </location>
</feature>
<feature type="helix" evidence="12">
    <location>
        <begin position="167"/>
        <end position="171"/>
    </location>
</feature>
<feature type="turn" evidence="13">
    <location>
        <begin position="175"/>
        <end position="177"/>
    </location>
</feature>
<feature type="helix" evidence="12">
    <location>
        <begin position="186"/>
        <end position="188"/>
    </location>
</feature>
<feature type="helix" evidence="12">
    <location>
        <begin position="194"/>
        <end position="198"/>
    </location>
</feature>
<feature type="helix" evidence="12">
    <location>
        <begin position="202"/>
        <end position="218"/>
    </location>
</feature>
<feature type="strand" evidence="13">
    <location>
        <begin position="222"/>
        <end position="224"/>
    </location>
</feature>
<feature type="helix" evidence="12">
    <location>
        <begin position="229"/>
        <end position="248"/>
    </location>
</feature>
<feature type="helix" evidence="12">
    <location>
        <begin position="252"/>
        <end position="266"/>
    </location>
</feature>
<feature type="helix" evidence="12">
    <location>
        <begin position="273"/>
        <end position="290"/>
    </location>
</feature>
<feature type="helix" evidence="12">
    <location>
        <begin position="298"/>
        <end position="316"/>
    </location>
</feature>
<feature type="helix" evidence="12">
    <location>
        <begin position="323"/>
        <end position="342"/>
    </location>
</feature>
<gene>
    <name type="primary">HIF1</name>
    <name type="ordered locus">YLL022C</name>
    <name type="ORF">L1205</name>
</gene>
<comment type="function">
    <text evidence="5 6">Histone H3 and H4 specific chaperone component of the nuclear histone acetyltransferase B (HAT-B) complex. Involved in chromatin assembly and telomere silencing.</text>
</comment>
<comment type="subunit">
    <text evidence="5 6 7 8">Homodimer (PubMed:27618665). The homodimer interacts with a histone tetramer containing H3 and H4; the interaction is direct (PubMed:24946827, PubMed:27618665). The homodimer interacts with heterodimeric histone H2A and H2B; the interaction is direct (PubMed:24946827, PubMed:27618665). Component of the nuclear histone acetyltransferase B (HAT-B) complex composed of at least HAT1, HAT2 and HIF1 (PubMed:14761951, PubMed:15099519). Does not interact with HAT1 in the absence of HAT2 (PubMed:14761951, PubMed:24946827). Interacts with histones H3 and H4 in a HAT1/HAT2 dependent manner (PubMed:14761951, PubMed:15099519). Interaction with heterotetrameric histone H3 and H4 precludes interaction with dimeric histone H2A and H2B, irrespective of the fact that their binding involves non-identical regions of the protein (PubMed:24946827, PubMed:27618665).</text>
</comment>
<comment type="interaction">
    <interactant intactId="EBI-31911">
        <id>Q12373</id>
    </interactant>
    <interactant intactId="EBI-8185">
        <id>P39984</id>
        <label>HAT2</label>
    </interactant>
    <organismsDiffer>false</organismsDiffer>
    <experiments>5</experiments>
</comment>
<comment type="interaction">
    <interactant intactId="EBI-31911">
        <id>Q12373</id>
    </interactant>
    <interactant intactId="EBI-8113">
        <id>P02309</id>
        <label>HHF2</label>
    </interactant>
    <organismsDiffer>false</organismsDiffer>
    <experiments>7</experiments>
</comment>
<comment type="subcellular location">
    <subcellularLocation>
        <location evidence="3 5 6">Nucleus</location>
    </subcellularLocation>
</comment>
<comment type="domain">
    <text evidence="7 8">The N-terminal TPR repeat region contains an acidic patch that is important for interaction with histones (PubMed:24946827, PubMed:27618665). A C-terminal, highly polar region mediates interaction with dimeric histone H2A and H2B, but is not involved in interaction with heterotetrameric histone H3 and H4 (PubMed:27618665).</text>
</comment>
<comment type="miscellaneous">
    <text evidence="4">Present with 4550 molecules/cell in log phase SD medium.</text>
</comment>
<comment type="similarity">
    <text evidence="9">Belongs to the NASP family.</text>
</comment>
<evidence type="ECO:0000255" key="1"/>
<evidence type="ECO:0000256" key="2">
    <source>
        <dbReference type="SAM" id="MobiDB-lite"/>
    </source>
</evidence>
<evidence type="ECO:0000269" key="3">
    <source>
    </source>
</evidence>
<evidence type="ECO:0000269" key="4">
    <source>
    </source>
</evidence>
<evidence type="ECO:0000269" key="5">
    <source>
    </source>
</evidence>
<evidence type="ECO:0000269" key="6">
    <source>
    </source>
</evidence>
<evidence type="ECO:0000269" key="7">
    <source>
    </source>
</evidence>
<evidence type="ECO:0000269" key="8">
    <source>
    </source>
</evidence>
<evidence type="ECO:0000305" key="9"/>
<evidence type="ECO:0007744" key="10">
    <source>
    </source>
</evidence>
<evidence type="ECO:0007744" key="11">
    <source>
    </source>
</evidence>
<evidence type="ECO:0007829" key="12">
    <source>
        <dbReference type="PDB" id="4NQ0"/>
    </source>
</evidence>
<evidence type="ECO:0007829" key="13">
    <source>
        <dbReference type="PDB" id="5BT1"/>
    </source>
</evidence>
<sequence>MKLRAEDVLANGTSRHKVQIDMERQVQIAKDLLAQKKFLEAAKRCQQTLDSLPKDGLLPDPELFTIFAQAVYNMEVQNSGNLFGDALLAGDDGSGSESESEPESDVSNGEEGNENGQTEIPNSRMFQFDQEEEDLTGDVDSGDSEDSGEGSEEEEENVEKEEERLALHELANFSPANEHDDEIEDVSQLRKSGFHIYFENDLYENALDLLAQALMLLGRPTADGQSLTENSRLRIGDVYILMGDIEREAEMFSRAIHHYLKALGYYKTLKPAEQVTEKVIQAEFLVCDALRWVDQVPAKDKLKRFKHAKALLEKHMTTRPKDSELQQARLAQIQDDIDEVQENQQHGSKRPLSQPTTSIGFPALEKPLGDFNDLSQLVKKKPRRH</sequence>
<name>HIF1_YEAST</name>
<protein>
    <recommendedName>
        <fullName>HAT1-interacting factor 1</fullName>
    </recommendedName>
</protein>
<dbReference type="EMBL" id="X97560">
    <property type="protein sequence ID" value="CAA66169.1"/>
    <property type="molecule type" value="Genomic_DNA"/>
</dbReference>
<dbReference type="EMBL" id="Z73127">
    <property type="protein sequence ID" value="CAA97470.1"/>
    <property type="molecule type" value="Genomic_DNA"/>
</dbReference>
<dbReference type="EMBL" id="BK006945">
    <property type="protein sequence ID" value="DAA09298.1"/>
    <property type="molecule type" value="Genomic_DNA"/>
</dbReference>
<dbReference type="PIR" id="S64770">
    <property type="entry name" value="S64770"/>
</dbReference>
<dbReference type="RefSeq" id="NP_013078.1">
    <property type="nucleotide sequence ID" value="NM_001181842.1"/>
</dbReference>
<dbReference type="PDB" id="4NQ0">
    <property type="method" value="X-ray"/>
    <property type="resolution" value="2.10 A"/>
    <property type="chains" value="A=1-385"/>
</dbReference>
<dbReference type="PDB" id="5BT1">
    <property type="method" value="X-ray"/>
    <property type="resolution" value="2.62 A"/>
    <property type="chains" value="A/B=1-385"/>
</dbReference>
<dbReference type="PDBsum" id="4NQ0"/>
<dbReference type="PDBsum" id="5BT1"/>
<dbReference type="SMR" id="Q12373"/>
<dbReference type="BioGRID" id="31231">
    <property type="interactions" value="63"/>
</dbReference>
<dbReference type="ComplexPortal" id="CPX-1682">
    <property type="entry name" value="Histone acetyltransferase B"/>
</dbReference>
<dbReference type="DIP" id="DIP-6442N"/>
<dbReference type="FunCoup" id="Q12373">
    <property type="interactions" value="215"/>
</dbReference>
<dbReference type="IntAct" id="Q12373">
    <property type="interactions" value="6"/>
</dbReference>
<dbReference type="MINT" id="Q12373"/>
<dbReference type="STRING" id="4932.YLL022C"/>
<dbReference type="iPTMnet" id="Q12373"/>
<dbReference type="PaxDb" id="4932-YLL022C"/>
<dbReference type="PeptideAtlas" id="Q12373"/>
<dbReference type="EnsemblFungi" id="YLL022C_mRNA">
    <property type="protein sequence ID" value="YLL022C"/>
    <property type="gene ID" value="YLL022C"/>
</dbReference>
<dbReference type="GeneID" id="850638"/>
<dbReference type="KEGG" id="sce:YLL022C"/>
<dbReference type="AGR" id="SGD:S000003945"/>
<dbReference type="SGD" id="S000003945">
    <property type="gene designation" value="HIF1"/>
</dbReference>
<dbReference type="VEuPathDB" id="FungiDB:YLL022C"/>
<dbReference type="eggNOG" id="KOG4563">
    <property type="taxonomic scope" value="Eukaryota"/>
</dbReference>
<dbReference type="HOGENOM" id="CLU_797425_0_0_1"/>
<dbReference type="InParanoid" id="Q12373"/>
<dbReference type="OMA" id="FTIFAQA"/>
<dbReference type="OrthoDB" id="5587616at2759"/>
<dbReference type="BioCyc" id="YEAST:G3O-32126-MONOMER"/>
<dbReference type="BioGRID-ORCS" id="850638">
    <property type="hits" value="4 hits in 10 CRISPR screens"/>
</dbReference>
<dbReference type="EvolutionaryTrace" id="Q12373"/>
<dbReference type="PRO" id="PR:Q12373"/>
<dbReference type="Proteomes" id="UP000002311">
    <property type="component" value="Chromosome XII"/>
</dbReference>
<dbReference type="RNAct" id="Q12373">
    <property type="molecule type" value="protein"/>
</dbReference>
<dbReference type="GO" id="GO:0000781">
    <property type="term" value="C:chromosome, telomeric region"/>
    <property type="evidence" value="ECO:0007669"/>
    <property type="project" value="GOC"/>
</dbReference>
<dbReference type="GO" id="GO:0000123">
    <property type="term" value="C:histone acetyltransferase complex"/>
    <property type="evidence" value="ECO:0000314"/>
    <property type="project" value="SGD"/>
</dbReference>
<dbReference type="GO" id="GO:0005634">
    <property type="term" value="C:nucleus"/>
    <property type="evidence" value="ECO:0000314"/>
    <property type="project" value="ComplexPortal"/>
</dbReference>
<dbReference type="GO" id="GO:0042393">
    <property type="term" value="F:histone binding"/>
    <property type="evidence" value="ECO:0000314"/>
    <property type="project" value="UniProtKB"/>
</dbReference>
<dbReference type="GO" id="GO:0042803">
    <property type="term" value="F:protein homodimerization activity"/>
    <property type="evidence" value="ECO:0000353"/>
    <property type="project" value="UniProtKB"/>
</dbReference>
<dbReference type="GO" id="GO:0006334">
    <property type="term" value="P:nucleosome assembly"/>
    <property type="evidence" value="ECO:0000314"/>
    <property type="project" value="SGD"/>
</dbReference>
<dbReference type="GO" id="GO:0031509">
    <property type="term" value="P:subtelomeric heterochromatin formation"/>
    <property type="evidence" value="ECO:0000314"/>
    <property type="project" value="ComplexPortal"/>
</dbReference>
<dbReference type="FunFam" id="1.25.40.10:FF:000919">
    <property type="entry name" value="HAT1-interacting factor 1"/>
    <property type="match status" value="1"/>
</dbReference>
<dbReference type="Gene3D" id="1.25.40.10">
    <property type="entry name" value="Tetratricopeptide repeat domain"/>
    <property type="match status" value="2"/>
</dbReference>
<dbReference type="IDEAL" id="IID50290"/>
<dbReference type="InterPro" id="IPR011990">
    <property type="entry name" value="TPR-like_helical_dom_sf"/>
</dbReference>
<keyword id="KW-0002">3D-structure</keyword>
<keyword id="KW-0156">Chromatin regulator</keyword>
<keyword id="KW-0539">Nucleus</keyword>
<keyword id="KW-0597">Phosphoprotein</keyword>
<keyword id="KW-1185">Reference proteome</keyword>
<keyword id="KW-0677">Repeat</keyword>
<keyword id="KW-0802">TPR repeat</keyword>
<keyword id="KW-0804">Transcription</keyword>
<keyword id="KW-0805">Transcription regulation</keyword>